<dbReference type="EMBL" id="Z81147">
    <property type="protein sequence ID" value="CAB03532.2"/>
    <property type="molecule type" value="Genomic_DNA"/>
</dbReference>
<dbReference type="PIR" id="T24738">
    <property type="entry name" value="T24738"/>
</dbReference>
<dbReference type="RefSeq" id="NP_493122.2">
    <property type="nucleotide sequence ID" value="NM_060721.2"/>
</dbReference>
<dbReference type="SMR" id="O02305"/>
<dbReference type="FunCoup" id="O02305">
    <property type="interactions" value="173"/>
</dbReference>
<dbReference type="STRING" id="6239.T09E11.2.1"/>
<dbReference type="PaxDb" id="6239-T09E11.2"/>
<dbReference type="EnsemblMetazoa" id="T09E11.2.1">
    <property type="protein sequence ID" value="T09E11.2.1"/>
    <property type="gene ID" value="WBGene00011651"/>
</dbReference>
<dbReference type="GeneID" id="188330"/>
<dbReference type="KEGG" id="cel:CELE_T09E11.2"/>
<dbReference type="UCSC" id="T09E11.2">
    <property type="organism name" value="c. elegans"/>
</dbReference>
<dbReference type="AGR" id="WB:WBGene00011651"/>
<dbReference type="CTD" id="188330"/>
<dbReference type="WormBase" id="T09E11.2">
    <property type="protein sequence ID" value="CE42165"/>
    <property type="gene ID" value="WBGene00011651"/>
    <property type="gene designation" value="nhr-217"/>
</dbReference>
<dbReference type="eggNOG" id="KOG3575">
    <property type="taxonomic scope" value="Eukaryota"/>
</dbReference>
<dbReference type="GeneTree" id="ENSGT00970000195849"/>
<dbReference type="HOGENOM" id="CLU_066719_0_0_1"/>
<dbReference type="InParanoid" id="O02305"/>
<dbReference type="OrthoDB" id="9996608at2759"/>
<dbReference type="PhylomeDB" id="O02305"/>
<dbReference type="PRO" id="PR:O02305"/>
<dbReference type="Proteomes" id="UP000001940">
    <property type="component" value="Chromosome I"/>
</dbReference>
<dbReference type="GO" id="GO:0005634">
    <property type="term" value="C:nucleus"/>
    <property type="evidence" value="ECO:0007669"/>
    <property type="project" value="UniProtKB-SubCell"/>
</dbReference>
<dbReference type="GO" id="GO:0003700">
    <property type="term" value="F:DNA-binding transcription factor activity"/>
    <property type="evidence" value="ECO:0007669"/>
    <property type="project" value="InterPro"/>
</dbReference>
<dbReference type="GO" id="GO:0043565">
    <property type="term" value="F:sequence-specific DNA binding"/>
    <property type="evidence" value="ECO:0007669"/>
    <property type="project" value="InterPro"/>
</dbReference>
<dbReference type="GO" id="GO:0008270">
    <property type="term" value="F:zinc ion binding"/>
    <property type="evidence" value="ECO:0007669"/>
    <property type="project" value="UniProtKB-KW"/>
</dbReference>
<dbReference type="Gene3D" id="3.30.50.10">
    <property type="entry name" value="Erythroid Transcription Factor GATA-1, subunit A"/>
    <property type="match status" value="1"/>
</dbReference>
<dbReference type="Gene3D" id="1.10.565.10">
    <property type="entry name" value="Retinoid X Receptor"/>
    <property type="match status" value="1"/>
</dbReference>
<dbReference type="InterPro" id="IPR035500">
    <property type="entry name" value="NHR-like_dom_sf"/>
</dbReference>
<dbReference type="InterPro" id="IPR000536">
    <property type="entry name" value="Nucl_hrmn_rcpt_lig-bd"/>
</dbReference>
<dbReference type="InterPro" id="IPR001628">
    <property type="entry name" value="Znf_hrmn_rcpt"/>
</dbReference>
<dbReference type="InterPro" id="IPR013088">
    <property type="entry name" value="Znf_NHR/GATA"/>
</dbReference>
<dbReference type="PANTHER" id="PTHR46397:SF3">
    <property type="entry name" value="NR LBD DOMAIN-CONTAINING PROTEIN-RELATED"/>
    <property type="match status" value="1"/>
</dbReference>
<dbReference type="PANTHER" id="PTHR46397">
    <property type="entry name" value="NUCLEAR HORMONE RECEPTOR FAMILY-RELATED"/>
    <property type="match status" value="1"/>
</dbReference>
<dbReference type="Pfam" id="PF00104">
    <property type="entry name" value="Hormone_recep"/>
    <property type="match status" value="1"/>
</dbReference>
<dbReference type="Pfam" id="PF00105">
    <property type="entry name" value="zf-C4"/>
    <property type="match status" value="1"/>
</dbReference>
<dbReference type="SMART" id="SM00430">
    <property type="entry name" value="HOLI"/>
    <property type="match status" value="1"/>
</dbReference>
<dbReference type="SMART" id="SM00399">
    <property type="entry name" value="ZnF_C4"/>
    <property type="match status" value="1"/>
</dbReference>
<dbReference type="SUPFAM" id="SSF57716">
    <property type="entry name" value="Glucocorticoid receptor-like (DNA-binding domain)"/>
    <property type="match status" value="1"/>
</dbReference>
<dbReference type="SUPFAM" id="SSF48508">
    <property type="entry name" value="Nuclear receptor ligand-binding domain"/>
    <property type="match status" value="1"/>
</dbReference>
<dbReference type="PROSITE" id="PS51843">
    <property type="entry name" value="NR_LBD"/>
    <property type="match status" value="1"/>
</dbReference>
<dbReference type="PROSITE" id="PS00031">
    <property type="entry name" value="NUCLEAR_REC_DBD_1"/>
    <property type="match status" value="1"/>
</dbReference>
<dbReference type="PROSITE" id="PS51030">
    <property type="entry name" value="NUCLEAR_REC_DBD_2"/>
    <property type="match status" value="1"/>
</dbReference>
<reference key="1">
    <citation type="journal article" date="1998" name="Science">
        <title>Genome sequence of the nematode C. elegans: a platform for investigating biology.</title>
        <authorList>
            <consortium name="The C. elegans sequencing consortium"/>
        </authorList>
    </citation>
    <scope>NUCLEOTIDE SEQUENCE [LARGE SCALE GENOMIC DNA]</scope>
    <source>
        <strain>Bristol N2</strain>
    </source>
</reference>
<feature type="chain" id="PRO_0000223606" description="Nuclear hormone receptor family member nhr-217">
    <location>
        <begin position="1"/>
        <end position="383"/>
    </location>
</feature>
<feature type="domain" description="NR LBD" evidence="2">
    <location>
        <begin position="172"/>
        <end position="383"/>
    </location>
</feature>
<feature type="DNA-binding region" description="Nuclear receptor" evidence="1">
    <location>
        <begin position="53"/>
        <end position="127"/>
    </location>
</feature>
<feature type="zinc finger region" description="NR C4-type" evidence="1">
    <location>
        <begin position="56"/>
        <end position="77"/>
    </location>
</feature>
<feature type="zinc finger region" description="NR C4-type" evidence="1">
    <location>
        <begin position="93"/>
        <end position="109"/>
    </location>
</feature>
<protein>
    <recommendedName>
        <fullName>Nuclear hormone receptor family member nhr-217</fullName>
    </recommendedName>
</protein>
<accession>O02305</accession>
<name>NH217_CAEEL</name>
<sequence length="383" mass="43705">MCRSVSNMLDRISGLSKDASPNSTTTIQEIITLEKCLTSKVSALFLICKMLKIPACPVCDVPCRIEPHFGGIACAACAAFFRRTVSLNIGYMCKREKLCRKARKSCRACRFERCVKSAGLQRDYVRQLLTPRNTPLYILNRQDNTGGEIVRAFASPTMPKPEPTPQLGFSDILKVSNSSLFKFYLNQVEKAVKLRQKNTLTIKTNAELLKIVATQQELALEACRTCPGMDLLDKEDRKVVQKYFVFSNVWIESTWLYSLAKEHLETENNLNFDINLKKFIEQVKSTLLFSFSQFKLNIFELAAFKAICIWKLIYHETSRAMKIIAQEHYDGVASALRNYYETHTSMDHSEIAIRIGEITLLVVSIFQLYHDMAKLYVQIGIPF</sequence>
<evidence type="ECO:0000255" key="1">
    <source>
        <dbReference type="PROSITE-ProRule" id="PRU00407"/>
    </source>
</evidence>
<evidence type="ECO:0000255" key="2">
    <source>
        <dbReference type="PROSITE-ProRule" id="PRU01189"/>
    </source>
</evidence>
<evidence type="ECO:0000305" key="3"/>
<comment type="function">
    <text>Orphan nuclear receptor.</text>
</comment>
<comment type="subcellular location">
    <subcellularLocation>
        <location evidence="1">Nucleus</location>
    </subcellularLocation>
</comment>
<comment type="similarity">
    <text evidence="3">Belongs to the nuclear hormone receptor family.</text>
</comment>
<proteinExistence type="inferred from homology"/>
<gene>
    <name type="primary">nhr-217</name>
    <name type="ORF">T09E11.2</name>
</gene>
<keyword id="KW-0238">DNA-binding</keyword>
<keyword id="KW-0479">Metal-binding</keyword>
<keyword id="KW-0539">Nucleus</keyword>
<keyword id="KW-0675">Receptor</keyword>
<keyword id="KW-1185">Reference proteome</keyword>
<keyword id="KW-0804">Transcription</keyword>
<keyword id="KW-0805">Transcription regulation</keyword>
<keyword id="KW-0862">Zinc</keyword>
<keyword id="KW-0863">Zinc-finger</keyword>
<organism>
    <name type="scientific">Caenorhabditis elegans</name>
    <dbReference type="NCBI Taxonomy" id="6239"/>
    <lineage>
        <taxon>Eukaryota</taxon>
        <taxon>Metazoa</taxon>
        <taxon>Ecdysozoa</taxon>
        <taxon>Nematoda</taxon>
        <taxon>Chromadorea</taxon>
        <taxon>Rhabditida</taxon>
        <taxon>Rhabditina</taxon>
        <taxon>Rhabditomorpha</taxon>
        <taxon>Rhabditoidea</taxon>
        <taxon>Rhabditidae</taxon>
        <taxon>Peloderinae</taxon>
        <taxon>Caenorhabditis</taxon>
    </lineage>
</organism>